<dbReference type="EMBL" id="CP000608">
    <property type="protein sequence ID" value="ABO46122.1"/>
    <property type="molecule type" value="Genomic_DNA"/>
</dbReference>
<dbReference type="RefSeq" id="WP_003024602.1">
    <property type="nucleotide sequence ID" value="NC_009257.1"/>
</dbReference>
<dbReference type="SMR" id="A4IW20"/>
<dbReference type="KEGG" id="ftw:FTW_0136"/>
<dbReference type="HOGENOM" id="CLU_079215_4_5_6"/>
<dbReference type="GO" id="GO:0005886">
    <property type="term" value="C:plasma membrane"/>
    <property type="evidence" value="ECO:0007669"/>
    <property type="project" value="UniProtKB-SubCell"/>
</dbReference>
<dbReference type="GO" id="GO:0045259">
    <property type="term" value="C:proton-transporting ATP synthase complex"/>
    <property type="evidence" value="ECO:0007669"/>
    <property type="project" value="UniProtKB-KW"/>
</dbReference>
<dbReference type="GO" id="GO:0046933">
    <property type="term" value="F:proton-transporting ATP synthase activity, rotational mechanism"/>
    <property type="evidence" value="ECO:0007669"/>
    <property type="project" value="UniProtKB-UniRule"/>
</dbReference>
<dbReference type="GO" id="GO:0046961">
    <property type="term" value="F:proton-transporting ATPase activity, rotational mechanism"/>
    <property type="evidence" value="ECO:0007669"/>
    <property type="project" value="TreeGrafter"/>
</dbReference>
<dbReference type="CDD" id="cd06503">
    <property type="entry name" value="ATP-synt_Fo_b"/>
    <property type="match status" value="1"/>
</dbReference>
<dbReference type="Gene3D" id="6.10.250.1580">
    <property type="match status" value="1"/>
</dbReference>
<dbReference type="HAMAP" id="MF_01398">
    <property type="entry name" value="ATP_synth_b_bprime"/>
    <property type="match status" value="1"/>
</dbReference>
<dbReference type="InterPro" id="IPR028987">
    <property type="entry name" value="ATP_synth_B-like_membr_sf"/>
</dbReference>
<dbReference type="InterPro" id="IPR002146">
    <property type="entry name" value="ATP_synth_b/b'su_bac/chlpt"/>
</dbReference>
<dbReference type="InterPro" id="IPR005864">
    <property type="entry name" value="ATP_synth_F0_bsu_bac"/>
</dbReference>
<dbReference type="InterPro" id="IPR050059">
    <property type="entry name" value="ATP_synthase_B_chain"/>
</dbReference>
<dbReference type="NCBIfam" id="TIGR01144">
    <property type="entry name" value="ATP_synt_b"/>
    <property type="match status" value="1"/>
</dbReference>
<dbReference type="NCBIfam" id="NF004411">
    <property type="entry name" value="PRK05759.1-2"/>
    <property type="match status" value="1"/>
</dbReference>
<dbReference type="PANTHER" id="PTHR33445:SF1">
    <property type="entry name" value="ATP SYNTHASE SUBUNIT B"/>
    <property type="match status" value="1"/>
</dbReference>
<dbReference type="PANTHER" id="PTHR33445">
    <property type="entry name" value="ATP SYNTHASE SUBUNIT B', CHLOROPLASTIC"/>
    <property type="match status" value="1"/>
</dbReference>
<dbReference type="Pfam" id="PF00430">
    <property type="entry name" value="ATP-synt_B"/>
    <property type="match status" value="1"/>
</dbReference>
<dbReference type="SUPFAM" id="SSF81573">
    <property type="entry name" value="F1F0 ATP synthase subunit B, membrane domain"/>
    <property type="match status" value="1"/>
</dbReference>
<accession>A4IW20</accession>
<feature type="chain" id="PRO_0000368495" description="ATP synthase subunit b">
    <location>
        <begin position="1"/>
        <end position="156"/>
    </location>
</feature>
<feature type="transmembrane region" description="Helical" evidence="1">
    <location>
        <begin position="5"/>
        <end position="27"/>
    </location>
</feature>
<reference key="1">
    <citation type="journal article" date="2007" name="PLoS ONE">
        <title>Complete genomic characterization of a pathogenic A.II strain of Francisella tularensis subspecies tularensis.</title>
        <authorList>
            <person name="Beckstrom-Sternberg S.M."/>
            <person name="Auerbach R.K."/>
            <person name="Godbole S."/>
            <person name="Pearson J.V."/>
            <person name="Beckstrom-Sternberg J.S."/>
            <person name="Deng Z."/>
            <person name="Munk C."/>
            <person name="Kubota K."/>
            <person name="Zhou Y."/>
            <person name="Bruce D."/>
            <person name="Noronha J."/>
            <person name="Scheuermann R.H."/>
            <person name="Wang A."/>
            <person name="Wei X."/>
            <person name="Wang J."/>
            <person name="Hao J."/>
            <person name="Wagner D.M."/>
            <person name="Brettin T.S."/>
            <person name="Brown N."/>
            <person name="Gilna P."/>
            <person name="Keim P.S."/>
        </authorList>
    </citation>
    <scope>NUCLEOTIDE SEQUENCE [LARGE SCALE GENOMIC DNA]</scope>
    <source>
        <strain>WY96-3418</strain>
    </source>
</reference>
<proteinExistence type="inferred from homology"/>
<sequence>MDINITLIGQMITFAIFVGFTMKFVWPPLRKALEERREKIAEGLASADRASRELEVAKRQSAEILREAKAKATEIIENAYVRAHKVDEQAKEEAIAAADKIKSMAIAEIEQEKVKAKEQLKQELVNLAMAAASKIIAASVDEKASKKVLEDFVEKV</sequence>
<protein>
    <recommendedName>
        <fullName evidence="1">ATP synthase subunit b</fullName>
    </recommendedName>
    <alternativeName>
        <fullName evidence="1">ATP synthase F(0) sector subunit b</fullName>
    </alternativeName>
    <alternativeName>
        <fullName evidence="1">ATPase subunit I</fullName>
    </alternativeName>
    <alternativeName>
        <fullName evidence="1">F-type ATPase subunit b</fullName>
        <shortName evidence="1">F-ATPase subunit b</shortName>
    </alternativeName>
</protein>
<gene>
    <name evidence="1" type="primary">atpF</name>
    <name type="ordered locus">FTW_0136</name>
</gene>
<comment type="function">
    <text evidence="1">F(1)F(0) ATP synthase produces ATP from ADP in the presence of a proton or sodium gradient. F-type ATPases consist of two structural domains, F(1) containing the extramembraneous catalytic core and F(0) containing the membrane proton channel, linked together by a central stalk and a peripheral stalk. During catalysis, ATP synthesis in the catalytic domain of F(1) is coupled via a rotary mechanism of the central stalk subunits to proton translocation.</text>
</comment>
<comment type="function">
    <text evidence="1">Component of the F(0) channel, it forms part of the peripheral stalk, linking F(1) to F(0).</text>
</comment>
<comment type="subunit">
    <text evidence="1">F-type ATPases have 2 components, F(1) - the catalytic core - and F(0) - the membrane proton channel. F(1) has five subunits: alpha(3), beta(3), gamma(1), delta(1), epsilon(1). F(0) has three main subunits: a(1), b(2) and c(10-14). The alpha and beta chains form an alternating ring which encloses part of the gamma chain. F(1) is attached to F(0) by a central stalk formed by the gamma and epsilon chains, while a peripheral stalk is formed by the delta and b chains.</text>
</comment>
<comment type="subcellular location">
    <subcellularLocation>
        <location evidence="1">Cell inner membrane</location>
        <topology evidence="1">Single-pass membrane protein</topology>
    </subcellularLocation>
</comment>
<comment type="similarity">
    <text evidence="1">Belongs to the ATPase B chain family.</text>
</comment>
<name>ATPF_FRATW</name>
<evidence type="ECO:0000255" key="1">
    <source>
        <dbReference type="HAMAP-Rule" id="MF_01398"/>
    </source>
</evidence>
<keyword id="KW-0066">ATP synthesis</keyword>
<keyword id="KW-0997">Cell inner membrane</keyword>
<keyword id="KW-1003">Cell membrane</keyword>
<keyword id="KW-0138">CF(0)</keyword>
<keyword id="KW-0375">Hydrogen ion transport</keyword>
<keyword id="KW-0406">Ion transport</keyword>
<keyword id="KW-0472">Membrane</keyword>
<keyword id="KW-0812">Transmembrane</keyword>
<keyword id="KW-1133">Transmembrane helix</keyword>
<keyword id="KW-0813">Transport</keyword>
<organism>
    <name type="scientific">Francisella tularensis subsp. tularensis (strain WY96-3418)</name>
    <dbReference type="NCBI Taxonomy" id="418136"/>
    <lineage>
        <taxon>Bacteria</taxon>
        <taxon>Pseudomonadati</taxon>
        <taxon>Pseudomonadota</taxon>
        <taxon>Gammaproteobacteria</taxon>
        <taxon>Thiotrichales</taxon>
        <taxon>Francisellaceae</taxon>
        <taxon>Francisella</taxon>
    </lineage>
</organism>